<protein>
    <recommendedName>
        <fullName>Proenkephalin-B</fullName>
    </recommendedName>
    <alternativeName>
        <fullName>Beta-neoendorphin-dynorphin</fullName>
    </alternativeName>
    <alternativeName>
        <fullName>Preprodynorphin</fullName>
    </alternativeName>
    <component>
        <recommendedName>
            <fullName>Alpha-neoendorphin</fullName>
        </recommendedName>
    </component>
    <component>
        <recommendedName>
            <fullName>Beta-neoendorphin</fullName>
        </recommendedName>
    </component>
    <component>
        <recommendedName>
            <fullName>Big dynorphin</fullName>
            <shortName>Big Dyn</shortName>
        </recommendedName>
    </component>
    <component>
        <recommendedName>
            <fullName>Dynorphin A(1-17)</fullName>
            <shortName>Dyn-A17</shortName>
            <shortName>Dynorphin A</shortName>
        </recommendedName>
    </component>
    <component>
        <recommendedName>
            <fullName>Dynorphin A(1-13)</fullName>
        </recommendedName>
    </component>
    <component>
        <recommendedName>
            <fullName>Dynorphin A(1-8)</fullName>
        </recommendedName>
    </component>
    <component>
        <recommendedName>
            <fullName>Leu-enkephalin</fullName>
        </recommendedName>
    </component>
    <component>
        <recommendedName>
            <fullName>Rimorphin</fullName>
        </recommendedName>
        <alternativeName>
            <fullName>Dynorphin B</fullName>
            <shortName>Dyn-B</shortName>
        </alternativeName>
        <alternativeName>
            <fullName>Dynorphin B(1-13)</fullName>
        </alternativeName>
    </component>
    <component>
        <recommendedName>
            <fullName>Leumorphin</fullName>
        </recommendedName>
        <alternativeName>
            <fullName>Dynorphin B-29</fullName>
        </alternativeName>
    </component>
</protein>
<gene>
    <name type="primary">PDYN</name>
</gene>
<name>PDYN_BOVIN</name>
<sequence length="258" mass="28790">MVWQGLVLAACLLALPSVTADCLAQCSLCAVKTQDGPQPINPLVCSLECQAALQPAQEWERCQGLLSFLTPFTVGLNGKEDLKSKTVLEESSSEPAKHIRPYLKELEKNRFLLSTPAEKNALSSSLVEKLRGLSGRLGEDAESELMGDAQLNDGALEAEARDSNEEEPKEQVKRYGGFLRKYPKRSSEVTGKEAGEGEGGEVGHEDLYKRYGGFLRRIRPKLKWDNQKRYGGFLRRQFKVVTRSQEDPSAYYEELFDV</sequence>
<accession>Q95104</accession>
<dbReference type="EMBL" id="U58500">
    <property type="protein sequence ID" value="AAC48706.1"/>
    <property type="molecule type" value="mRNA"/>
</dbReference>
<dbReference type="PIR" id="JC6318">
    <property type="entry name" value="JC6318"/>
</dbReference>
<dbReference type="RefSeq" id="NP_776564.1">
    <property type="nucleotide sequence ID" value="NM_174139.2"/>
</dbReference>
<dbReference type="FunCoup" id="Q95104">
    <property type="interactions" value="74"/>
</dbReference>
<dbReference type="STRING" id="9913.ENSBTAP00000068675"/>
<dbReference type="PaxDb" id="9913-ENSBTAP00000055430"/>
<dbReference type="GeneID" id="281385"/>
<dbReference type="KEGG" id="bta:281385"/>
<dbReference type="CTD" id="5173"/>
<dbReference type="eggNOG" id="ENOG502RXT4">
    <property type="taxonomic scope" value="Eukaryota"/>
</dbReference>
<dbReference type="InParanoid" id="Q95104"/>
<dbReference type="OrthoDB" id="8912385at2759"/>
<dbReference type="Proteomes" id="UP000009136">
    <property type="component" value="Unplaced"/>
</dbReference>
<dbReference type="GO" id="GO:0043679">
    <property type="term" value="C:axon terminus"/>
    <property type="evidence" value="ECO:0000318"/>
    <property type="project" value="GO_Central"/>
</dbReference>
<dbReference type="GO" id="GO:0030425">
    <property type="term" value="C:dendrite"/>
    <property type="evidence" value="ECO:0000318"/>
    <property type="project" value="GO_Central"/>
</dbReference>
<dbReference type="GO" id="GO:0005576">
    <property type="term" value="C:extracellular region"/>
    <property type="evidence" value="ECO:0007669"/>
    <property type="project" value="UniProtKB-SubCell"/>
</dbReference>
<dbReference type="GO" id="GO:0043025">
    <property type="term" value="C:neuronal cell body"/>
    <property type="evidence" value="ECO:0000318"/>
    <property type="project" value="GO_Central"/>
</dbReference>
<dbReference type="GO" id="GO:0005886">
    <property type="term" value="C:plasma membrane"/>
    <property type="evidence" value="ECO:0000318"/>
    <property type="project" value="GO_Central"/>
</dbReference>
<dbReference type="GO" id="GO:0001515">
    <property type="term" value="F:opioid peptide activity"/>
    <property type="evidence" value="ECO:0007669"/>
    <property type="project" value="UniProtKB-KW"/>
</dbReference>
<dbReference type="GO" id="GO:0007268">
    <property type="term" value="P:chemical synaptic transmission"/>
    <property type="evidence" value="ECO:0000318"/>
    <property type="project" value="GO_Central"/>
</dbReference>
<dbReference type="GO" id="GO:0007218">
    <property type="term" value="P:neuropeptide signaling pathway"/>
    <property type="evidence" value="ECO:0000318"/>
    <property type="project" value="GO_Central"/>
</dbReference>
<dbReference type="GO" id="GO:0007600">
    <property type="term" value="P:sensory perception"/>
    <property type="evidence" value="ECO:0000318"/>
    <property type="project" value="GO_Central"/>
</dbReference>
<dbReference type="InterPro" id="IPR006024">
    <property type="entry name" value="Opioid_neupept"/>
</dbReference>
<dbReference type="InterPro" id="IPR000750">
    <property type="entry name" value="Proenkphlin_B"/>
</dbReference>
<dbReference type="PANTHER" id="PTHR11438">
    <property type="entry name" value="PROENKEPHALIN"/>
    <property type="match status" value="1"/>
</dbReference>
<dbReference type="PANTHER" id="PTHR11438:SF4">
    <property type="entry name" value="PROENKEPHALIN-B"/>
    <property type="match status" value="1"/>
</dbReference>
<dbReference type="Pfam" id="PF01160">
    <property type="entry name" value="Opiods_neuropep"/>
    <property type="match status" value="1"/>
</dbReference>
<dbReference type="PRINTS" id="PR01028">
    <property type="entry name" value="OPIOIDPRCRSR"/>
</dbReference>
<dbReference type="PRINTS" id="PR01030">
    <property type="entry name" value="PENKBPRCRSR"/>
</dbReference>
<dbReference type="PROSITE" id="PS01252">
    <property type="entry name" value="OPIOIDS_PRECURSOR"/>
    <property type="match status" value="1"/>
</dbReference>
<comment type="function">
    <text evidence="1">Leu-enkephalins compete with and mimic the effects of opiate drugs. They play a role in a number of physiologic functions, including pain perception and responses to stress (By similarity).</text>
</comment>
<comment type="function">
    <text evidence="1">Dynorphin peptides differentially regulate the kappa opioid receptor. Dynorphin A(1-13) has a typical opioid activity, it is 700 times more potent than Leu-enkephalin (By similarity).</text>
</comment>
<comment type="function">
    <text evidence="1">Leumorphin has a typical opioid activity and may have anti-apoptotic effect.</text>
</comment>
<comment type="subcellular location">
    <subcellularLocation>
        <location>Secreted</location>
    </subcellularLocation>
</comment>
<comment type="PTM">
    <text>The N-terminal domain contains 6 conserved cysteines thought to be involved in disulfide bonding and/or processing.</text>
</comment>
<comment type="similarity">
    <text evidence="3">Belongs to the opioid neuropeptide precursor family.</text>
</comment>
<feature type="signal peptide" evidence="2">
    <location>
        <begin position="1"/>
        <end position="20"/>
    </location>
</feature>
<feature type="propeptide" id="PRO_0000008162">
    <location>
        <begin position="21"/>
        <end position="172"/>
    </location>
</feature>
<feature type="peptide" id="PRO_0000306335" description="Alpha-neoendorphin" evidence="1">
    <location>
        <begin position="175"/>
        <end position="184"/>
    </location>
</feature>
<feature type="peptide" id="PRO_0000008163" description="Beta-neoendorphin">
    <location>
        <begin position="175"/>
        <end position="183"/>
    </location>
</feature>
<feature type="peptide" id="PRO_0000306336" description="Leu-enkephalin" evidence="1">
    <location>
        <begin position="175"/>
        <end position="179"/>
    </location>
</feature>
<feature type="propeptide" id="PRO_0000008164">
    <location>
        <begin position="186"/>
        <end position="208"/>
    </location>
</feature>
<feature type="peptide" id="PRO_0000306337" description="Big dynorphin" evidence="1">
    <location>
        <begin position="211"/>
        <end position="242"/>
    </location>
</feature>
<feature type="peptide" id="PRO_0000008165" description="Dynorphin A(1-17)">
    <location>
        <begin position="211"/>
        <end position="227"/>
    </location>
</feature>
<feature type="peptide" id="PRO_0000306338" description="Dynorphin A(1-13)" evidence="1">
    <location>
        <begin position="211"/>
        <end position="223"/>
    </location>
</feature>
<feature type="peptide" id="PRO_0000306339" description="Dynorphin A(1-8)" evidence="1">
    <location>
        <begin position="211"/>
        <end position="218"/>
    </location>
</feature>
<feature type="peptide" id="PRO_0000306340" description="Leu-enkephalin" evidence="1">
    <location>
        <begin position="211"/>
        <end position="215"/>
    </location>
</feature>
<feature type="peptide" id="PRO_0000008166" description="Leumorphin" evidence="1">
    <location>
        <begin position="230"/>
        <end position="258"/>
    </location>
</feature>
<feature type="peptide" id="PRO_0000008167" description="Rimorphin" evidence="1">
    <location>
        <begin position="230"/>
        <end position="242"/>
    </location>
</feature>
<feature type="peptide" id="PRO_0000008168" description="Leu-enkephalin">
    <location>
        <begin position="230"/>
        <end position="234"/>
    </location>
</feature>
<proteinExistence type="evidence at transcript level"/>
<evidence type="ECO:0000250" key="1"/>
<evidence type="ECO:0000255" key="2"/>
<evidence type="ECO:0000305" key="3"/>
<keyword id="KW-0165">Cleavage on pair of basic residues</keyword>
<keyword id="KW-1015">Disulfide bond</keyword>
<keyword id="KW-0257">Endorphin</keyword>
<keyword id="KW-0527">Neuropeptide</keyword>
<keyword id="KW-0529">Neurotransmitter</keyword>
<keyword id="KW-0555">Opioid peptide</keyword>
<keyword id="KW-1185">Reference proteome</keyword>
<keyword id="KW-0964">Secreted</keyword>
<keyword id="KW-0732">Signal</keyword>
<reference key="1">
    <citation type="journal article" date="1997" name="Gene">
        <title>cDNA sequence and expression of bovine prodynorphin.</title>
        <authorList>
            <person name="Jiang H."/>
            <person name="Weesner G.D."/>
            <person name="Malven P.V."/>
        </authorList>
    </citation>
    <scope>NUCLEOTIDE SEQUENCE [MRNA]</scope>
    <source>
        <tissue>Brain</tissue>
    </source>
</reference>
<organism>
    <name type="scientific">Bos taurus</name>
    <name type="common">Bovine</name>
    <dbReference type="NCBI Taxonomy" id="9913"/>
    <lineage>
        <taxon>Eukaryota</taxon>
        <taxon>Metazoa</taxon>
        <taxon>Chordata</taxon>
        <taxon>Craniata</taxon>
        <taxon>Vertebrata</taxon>
        <taxon>Euteleostomi</taxon>
        <taxon>Mammalia</taxon>
        <taxon>Eutheria</taxon>
        <taxon>Laurasiatheria</taxon>
        <taxon>Artiodactyla</taxon>
        <taxon>Ruminantia</taxon>
        <taxon>Pecora</taxon>
        <taxon>Bovidae</taxon>
        <taxon>Bovinae</taxon>
        <taxon>Bos</taxon>
    </lineage>
</organism>